<dbReference type="EMBL" id="X97496">
    <property type="protein sequence ID" value="CAA66127.1"/>
    <property type="molecule type" value="Genomic_DNA"/>
</dbReference>
<dbReference type="EMBL" id="BA000022">
    <property type="protein sequence ID" value="BAA18533.1"/>
    <property type="status" value="ALT_INIT"/>
    <property type="molecule type" value="Genomic_DNA"/>
</dbReference>
<dbReference type="PIR" id="S76404">
    <property type="entry name" value="S76404"/>
</dbReference>
<dbReference type="PDB" id="1UL3">
    <property type="method" value="X-ray"/>
    <property type="resolution" value="2.00 A"/>
    <property type="chains" value="A/B/C/D=1-112"/>
</dbReference>
<dbReference type="PDBsum" id="1UL3"/>
<dbReference type="SMR" id="Q55247"/>
<dbReference type="FunCoup" id="Q55247">
    <property type="interactions" value="346"/>
</dbReference>
<dbReference type="IntAct" id="Q55247">
    <property type="interactions" value="3"/>
</dbReference>
<dbReference type="STRING" id="1148.gene:10499415"/>
<dbReference type="PaxDb" id="1148-1653621"/>
<dbReference type="EnsemblBacteria" id="BAA18533">
    <property type="protein sequence ID" value="BAA18533"/>
    <property type="gene ID" value="BAA18533"/>
</dbReference>
<dbReference type="KEGG" id="syn:ssl0707"/>
<dbReference type="eggNOG" id="COG0347">
    <property type="taxonomic scope" value="Bacteria"/>
</dbReference>
<dbReference type="InParanoid" id="Q55247"/>
<dbReference type="PhylomeDB" id="Q55247"/>
<dbReference type="EvolutionaryTrace" id="Q55247"/>
<dbReference type="Proteomes" id="UP000001425">
    <property type="component" value="Chromosome"/>
</dbReference>
<dbReference type="GO" id="GO:0005829">
    <property type="term" value="C:cytosol"/>
    <property type="evidence" value="ECO:0000318"/>
    <property type="project" value="GO_Central"/>
</dbReference>
<dbReference type="GO" id="GO:0005524">
    <property type="term" value="F:ATP binding"/>
    <property type="evidence" value="ECO:0000318"/>
    <property type="project" value="GO_Central"/>
</dbReference>
<dbReference type="GO" id="GO:0030234">
    <property type="term" value="F:enzyme regulator activity"/>
    <property type="evidence" value="ECO:0000318"/>
    <property type="project" value="GO_Central"/>
</dbReference>
<dbReference type="GO" id="GO:0006808">
    <property type="term" value="P:regulation of nitrogen utilization"/>
    <property type="evidence" value="ECO:0000318"/>
    <property type="project" value="GO_Central"/>
</dbReference>
<dbReference type="FunFam" id="3.30.70.120:FF:000001">
    <property type="entry name" value="Nitrogen regulatory protein P-II"/>
    <property type="match status" value="1"/>
</dbReference>
<dbReference type="Gene3D" id="3.30.70.120">
    <property type="match status" value="1"/>
</dbReference>
<dbReference type="InterPro" id="IPR002187">
    <property type="entry name" value="N-reg_PII"/>
</dbReference>
<dbReference type="InterPro" id="IPR011322">
    <property type="entry name" value="N-reg_PII-like_a/b"/>
</dbReference>
<dbReference type="InterPro" id="IPR015867">
    <property type="entry name" value="N-reg_PII/ATP_PRibTrfase_C"/>
</dbReference>
<dbReference type="InterPro" id="IPR017918">
    <property type="entry name" value="N-reg_PII_CS"/>
</dbReference>
<dbReference type="InterPro" id="IPR002332">
    <property type="entry name" value="N-reg_PII_urydylation_site"/>
</dbReference>
<dbReference type="PANTHER" id="PTHR30115">
    <property type="entry name" value="NITROGEN REGULATORY PROTEIN P-II"/>
    <property type="match status" value="1"/>
</dbReference>
<dbReference type="PANTHER" id="PTHR30115:SF11">
    <property type="entry name" value="NITROGEN REGULATORY PROTEIN P-II HOMOLOG"/>
    <property type="match status" value="1"/>
</dbReference>
<dbReference type="Pfam" id="PF00543">
    <property type="entry name" value="P-II"/>
    <property type="match status" value="1"/>
</dbReference>
<dbReference type="PIRSF" id="PIRSF039144">
    <property type="entry name" value="GlnB"/>
    <property type="match status" value="1"/>
</dbReference>
<dbReference type="PRINTS" id="PR00340">
    <property type="entry name" value="PIIGLNB"/>
</dbReference>
<dbReference type="SMART" id="SM00938">
    <property type="entry name" value="P-II"/>
    <property type="match status" value="1"/>
</dbReference>
<dbReference type="SUPFAM" id="SSF54913">
    <property type="entry name" value="GlnB-like"/>
    <property type="match status" value="1"/>
</dbReference>
<dbReference type="PROSITE" id="PS00638">
    <property type="entry name" value="PII_GLNB_CTER"/>
    <property type="match status" value="1"/>
</dbReference>
<dbReference type="PROSITE" id="PS51343">
    <property type="entry name" value="PII_GLNB_DOM"/>
    <property type="match status" value="1"/>
</dbReference>
<dbReference type="PROSITE" id="PS00496">
    <property type="entry name" value="PII_GLNB_UMP"/>
    <property type="match status" value="1"/>
</dbReference>
<reference key="1">
    <citation type="journal article" date="1997" name="Plant Mol. Biol.">
        <title>Nitrogen availability and electron transport control the expression of glnB gene (encoding PII protein) in the cyanobacterium Synechocystis sp. PCC 6803.</title>
        <authorList>
            <person name="Garcia-Dominguez M."/>
            <person name="Florencio F.J."/>
        </authorList>
    </citation>
    <scope>NUCLEOTIDE SEQUENCE [GENOMIC DNA]</scope>
</reference>
<reference key="2">
    <citation type="journal article" date="1996" name="DNA Res.">
        <title>Sequence analysis of the genome of the unicellular cyanobacterium Synechocystis sp. strain PCC6803. II. Sequence determination of the entire genome and assignment of potential protein-coding regions.</title>
        <authorList>
            <person name="Kaneko T."/>
            <person name="Sato S."/>
            <person name="Kotani H."/>
            <person name="Tanaka A."/>
            <person name="Asamizu E."/>
            <person name="Nakamura Y."/>
            <person name="Miyajima N."/>
            <person name="Hirosawa M."/>
            <person name="Sugiura M."/>
            <person name="Sasamoto S."/>
            <person name="Kimura T."/>
            <person name="Hosouchi T."/>
            <person name="Matsuno A."/>
            <person name="Muraki A."/>
            <person name="Nakazaki N."/>
            <person name="Naruo K."/>
            <person name="Okumura S."/>
            <person name="Shimpo S."/>
            <person name="Takeuchi C."/>
            <person name="Wada T."/>
            <person name="Watanabe A."/>
            <person name="Yamada M."/>
            <person name="Yasuda M."/>
            <person name="Tabata S."/>
        </authorList>
    </citation>
    <scope>NUCLEOTIDE SEQUENCE [LARGE SCALE GENOMIC DNA]</scope>
    <source>
        <strain>ATCC 27184 / PCC 6803 / Kazusa</strain>
    </source>
</reference>
<reference key="3">
    <citation type="journal article" date="1997" name="Electrophoresis">
        <title>Towards a proteome project of cyanobacterium Synechocystis sp. strain PCC6803: linking 130 protein spots with their respective genes.</title>
        <authorList>
            <person name="Sazuka T."/>
            <person name="Ohara O."/>
        </authorList>
    </citation>
    <scope>PROTEIN SEQUENCE OF 1-20</scope>
</reference>
<reference key="4">
    <citation type="journal article" date="2003" name="Acta Crystallogr. D">
        <title>The structures of the PII proteins from the cyanobacteria Synechococcus sp. PCC 7942 and Synechocystis sp. PCC 6803.</title>
        <authorList>
            <person name="Xu Y."/>
            <person name="Carr P.D."/>
            <person name="Clancy P."/>
            <person name="Garcia-Dominguez M."/>
            <person name="Forchhammer K."/>
            <person name="Florencio F."/>
            <person name="Vasudevan S.G."/>
            <person name="Tandeau de Marsac N."/>
            <person name="Ollis D.L."/>
        </authorList>
    </citation>
    <scope>X-RAY CRYSTALLOGRAPHY (2.0 ANGSTROMS)</scope>
</reference>
<name>GLNB_SYNY3</name>
<keyword id="KW-0002">3D-structure</keyword>
<keyword id="KW-0903">Direct protein sequencing</keyword>
<keyword id="KW-0547">Nucleotide-binding</keyword>
<keyword id="KW-0597">Phosphoprotein</keyword>
<keyword id="KW-1185">Reference proteome</keyword>
<keyword id="KW-0804">Transcription</keyword>
<keyword id="KW-0805">Transcription regulation</keyword>
<proteinExistence type="evidence at protein level"/>
<protein>
    <recommendedName>
        <fullName>Nitrogen regulatory protein P-II</fullName>
    </recommendedName>
    <alternativeName>
        <fullName>PII signal transducing protein</fullName>
    </alternativeName>
</protein>
<sequence>MKKVEAIIRPFKLDEVKIALVNAGIVGMTVSEVRGFGRQKGQTERYRGSEYTVEFLQKLKIEIVVDEGQVDMVVDKLVSAARTGEIGDGKIFISPVDSVVRIRTGEKDTEAI</sequence>
<accession>Q55247</accession>
<feature type="chain" id="PRO_0000139795" description="Nitrogen regulatory protein P-II">
    <location>
        <begin position="1"/>
        <end position="112"/>
    </location>
</feature>
<feature type="modified residue" description="Phosphoserine" evidence="3">
    <location>
        <position position="49"/>
    </location>
</feature>
<feature type="modified residue" description="O-UMP-tyrosine" evidence="2">
    <location>
        <position position="51"/>
    </location>
</feature>
<feature type="strand" evidence="4">
    <location>
        <begin position="2"/>
        <end position="8"/>
    </location>
</feature>
<feature type="helix" evidence="4">
    <location>
        <begin position="10"/>
        <end position="12"/>
    </location>
</feature>
<feature type="helix" evidence="4">
    <location>
        <begin position="13"/>
        <end position="21"/>
    </location>
</feature>
<feature type="turn" evidence="4">
    <location>
        <begin position="22"/>
        <end position="24"/>
    </location>
</feature>
<feature type="strand" evidence="4">
    <location>
        <begin position="28"/>
        <end position="35"/>
    </location>
</feature>
<feature type="strand" evidence="4">
    <location>
        <begin position="56"/>
        <end position="65"/>
    </location>
</feature>
<feature type="helix" evidence="4">
    <location>
        <begin position="67"/>
        <end position="69"/>
    </location>
</feature>
<feature type="helix" evidence="4">
    <location>
        <begin position="70"/>
        <end position="81"/>
    </location>
</feature>
<feature type="strand" evidence="4">
    <location>
        <begin position="90"/>
        <end position="95"/>
    </location>
</feature>
<feature type="strand" evidence="4">
    <location>
        <begin position="98"/>
        <end position="101"/>
    </location>
</feature>
<feature type="turn" evidence="4">
    <location>
        <begin position="102"/>
        <end position="104"/>
    </location>
</feature>
<feature type="strand" evidence="4">
    <location>
        <begin position="107"/>
        <end position="109"/>
    </location>
</feature>
<gene>
    <name type="primary">glnB</name>
    <name type="ordered locus">ssl0707</name>
</gene>
<comment type="function">
    <text evidence="1">P-II indirectly controls the transcription of the GS gene (glnA). P-II prevents NR-II-catalyzed conversion of NR-I to NR-I-phosphate, the transcriptional activator of glnA. When P-II is phosphorylated, these events are reversed. In nitrogen-limiting conditions, when the ratio of Gln to 2-ketoglutarate decreases, P-II is phosphorylated which allows the deadenylation of glutamine synthetase (GS), thus activating the enzyme (By similarity).</text>
</comment>
<comment type="subunit">
    <text evidence="1">Homotrimer.</text>
</comment>
<comment type="interaction">
    <interactant intactId="EBI-906365">
        <id>Q55247</id>
    </interactant>
    <interactant intactId="EBI-906297">
        <id>P73148</id>
        <label>sll0985</label>
    </interactant>
    <organismsDiffer>false</organismsDiffer>
    <experiments>5</experiments>
</comment>
<comment type="PTM">
    <text evidence="1">Phosphorylation dependent on the nitrogen source and spectral light quality.</text>
</comment>
<comment type="similarity">
    <text evidence="2">Belongs to the P(II) protein family.</text>
</comment>
<comment type="sequence caution" evidence="3">
    <conflict type="erroneous initiation">
        <sequence resource="EMBL-CDS" id="BAA18533"/>
    </conflict>
</comment>
<organism>
    <name type="scientific">Synechocystis sp. (strain ATCC 27184 / PCC 6803 / Kazusa)</name>
    <dbReference type="NCBI Taxonomy" id="1111708"/>
    <lineage>
        <taxon>Bacteria</taxon>
        <taxon>Bacillati</taxon>
        <taxon>Cyanobacteriota</taxon>
        <taxon>Cyanophyceae</taxon>
        <taxon>Synechococcales</taxon>
        <taxon>Merismopediaceae</taxon>
        <taxon>Synechocystis</taxon>
    </lineage>
</organism>
<evidence type="ECO:0000250" key="1"/>
<evidence type="ECO:0000255" key="2">
    <source>
        <dbReference type="PROSITE-ProRule" id="PRU00675"/>
    </source>
</evidence>
<evidence type="ECO:0000305" key="3"/>
<evidence type="ECO:0007829" key="4">
    <source>
        <dbReference type="PDB" id="1UL3"/>
    </source>
</evidence>